<gene>
    <name evidence="1" type="primary">rraA</name>
    <name type="ordered locus">YPN_3750</name>
    <name type="ORF">YP516_4265</name>
</gene>
<sequence length="161" mass="17315">MKYDTSDLCDIYHEEVNVVEPLFSNFGGRTSFGGKITTVKCFEDNGLLFDLLEENGLGRVLVVDGGGSVRRALINAELAELALKNEWEGIVVYGAVRQVDDLAELDIGIQAMAAIPVGAADEGVGESDIRVNFGGVTFFSGDHLYADNTGIILSEDPLDIE</sequence>
<protein>
    <recommendedName>
        <fullName evidence="1">Regulator of ribonuclease activity A</fullName>
    </recommendedName>
</protein>
<evidence type="ECO:0000255" key="1">
    <source>
        <dbReference type="HAMAP-Rule" id="MF_00471"/>
    </source>
</evidence>
<accession>Q1CD53</accession>
<accession>D1Q2A6</accession>
<name>RRAA_YERPN</name>
<keyword id="KW-0963">Cytoplasm</keyword>
<reference key="1">
    <citation type="journal article" date="2006" name="J. Bacteriol.">
        <title>Complete genome sequence of Yersinia pestis strains Antiqua and Nepal516: evidence of gene reduction in an emerging pathogen.</title>
        <authorList>
            <person name="Chain P.S.G."/>
            <person name="Hu P."/>
            <person name="Malfatti S.A."/>
            <person name="Radnedge L."/>
            <person name="Larimer F."/>
            <person name="Vergez L.M."/>
            <person name="Worsham P."/>
            <person name="Chu M.C."/>
            <person name="Andersen G.L."/>
        </authorList>
    </citation>
    <scope>NUCLEOTIDE SEQUENCE [LARGE SCALE GENOMIC DNA]</scope>
    <source>
        <strain>Nepal516</strain>
    </source>
</reference>
<reference key="2">
    <citation type="submission" date="2009-04" db="EMBL/GenBank/DDBJ databases">
        <title>Yersinia pestis Nepal516A whole genome shotgun sequencing project.</title>
        <authorList>
            <person name="Plunkett G. III"/>
            <person name="Anderson B.D."/>
            <person name="Baumler D.J."/>
            <person name="Burland V."/>
            <person name="Cabot E.L."/>
            <person name="Glasner J.D."/>
            <person name="Mau B."/>
            <person name="Neeno-Eckwall E."/>
            <person name="Perna N.T."/>
            <person name="Munk A.C."/>
            <person name="Tapia R."/>
            <person name="Green L.D."/>
            <person name="Rogers Y.C."/>
            <person name="Detter J.C."/>
            <person name="Bruce D.C."/>
            <person name="Brettin T.S."/>
        </authorList>
    </citation>
    <scope>NUCLEOTIDE SEQUENCE [LARGE SCALE GENOMIC DNA]</scope>
    <source>
        <strain>Nepal516</strain>
    </source>
</reference>
<proteinExistence type="inferred from homology"/>
<feature type="chain" id="PRO_1000013883" description="Regulator of ribonuclease activity A">
    <location>
        <begin position="1"/>
        <end position="161"/>
    </location>
</feature>
<comment type="function">
    <text evidence="1">Globally modulates RNA abundance by binding to RNase E (Rne) and regulating its endonucleolytic activity. Can modulate Rne action in a substrate-dependent manner by altering the composition of the degradosome. Modulates RNA-binding and helicase activities of the degradosome.</text>
</comment>
<comment type="subunit">
    <text evidence="1">Homotrimer. Binds to both RNA-binding sites in the C-terminal region of Rne and to RhlB.</text>
</comment>
<comment type="subcellular location">
    <subcellularLocation>
        <location evidence="1">Cytoplasm</location>
    </subcellularLocation>
</comment>
<comment type="similarity">
    <text evidence="1">Belongs to the RraA family.</text>
</comment>
<organism>
    <name type="scientific">Yersinia pestis bv. Antiqua (strain Nepal516)</name>
    <dbReference type="NCBI Taxonomy" id="377628"/>
    <lineage>
        <taxon>Bacteria</taxon>
        <taxon>Pseudomonadati</taxon>
        <taxon>Pseudomonadota</taxon>
        <taxon>Gammaproteobacteria</taxon>
        <taxon>Enterobacterales</taxon>
        <taxon>Yersiniaceae</taxon>
        <taxon>Yersinia</taxon>
    </lineage>
</organism>
<dbReference type="EMBL" id="CP000305">
    <property type="protein sequence ID" value="ABG20077.1"/>
    <property type="molecule type" value="Genomic_DNA"/>
</dbReference>
<dbReference type="EMBL" id="ACNQ01000019">
    <property type="protein sequence ID" value="EEO74659.1"/>
    <property type="molecule type" value="Genomic_DNA"/>
</dbReference>
<dbReference type="RefSeq" id="WP_002208945.1">
    <property type="nucleotide sequence ID" value="NZ_ACNQ01000019.1"/>
</dbReference>
<dbReference type="SMR" id="Q1CD53"/>
<dbReference type="GeneID" id="57974491"/>
<dbReference type="KEGG" id="ypn:YPN_3750"/>
<dbReference type="HOGENOM" id="CLU_072626_4_0_6"/>
<dbReference type="Proteomes" id="UP000008936">
    <property type="component" value="Chromosome"/>
</dbReference>
<dbReference type="GO" id="GO:0005829">
    <property type="term" value="C:cytosol"/>
    <property type="evidence" value="ECO:0007669"/>
    <property type="project" value="TreeGrafter"/>
</dbReference>
<dbReference type="GO" id="GO:0060698">
    <property type="term" value="F:endoribonuclease inhibitor activity"/>
    <property type="evidence" value="ECO:0007669"/>
    <property type="project" value="UniProtKB-UniRule"/>
</dbReference>
<dbReference type="GO" id="GO:0019899">
    <property type="term" value="F:enzyme binding"/>
    <property type="evidence" value="ECO:0007669"/>
    <property type="project" value="UniProtKB-UniRule"/>
</dbReference>
<dbReference type="GO" id="GO:1902369">
    <property type="term" value="P:negative regulation of RNA catabolic process"/>
    <property type="evidence" value="ECO:0007669"/>
    <property type="project" value="TreeGrafter"/>
</dbReference>
<dbReference type="CDD" id="cd16841">
    <property type="entry name" value="RraA_family"/>
    <property type="match status" value="1"/>
</dbReference>
<dbReference type="Gene3D" id="3.50.30.40">
    <property type="entry name" value="Ribonuclease E inhibitor RraA/RraA-like"/>
    <property type="match status" value="1"/>
</dbReference>
<dbReference type="HAMAP" id="MF_00471">
    <property type="entry name" value="RraA"/>
    <property type="match status" value="1"/>
</dbReference>
<dbReference type="InterPro" id="IPR010203">
    <property type="entry name" value="RraA"/>
</dbReference>
<dbReference type="InterPro" id="IPR005493">
    <property type="entry name" value="RraA/RraA-like"/>
</dbReference>
<dbReference type="InterPro" id="IPR036704">
    <property type="entry name" value="RraA/RraA-like_sf"/>
</dbReference>
<dbReference type="InterPro" id="IPR014339">
    <property type="entry name" value="RraA_gpbac"/>
</dbReference>
<dbReference type="NCBIfam" id="TIGR01935">
    <property type="entry name" value="NOT-MenG"/>
    <property type="match status" value="1"/>
</dbReference>
<dbReference type="NCBIfam" id="NF006875">
    <property type="entry name" value="PRK09372.1"/>
    <property type="match status" value="1"/>
</dbReference>
<dbReference type="NCBIfam" id="TIGR02998">
    <property type="entry name" value="RraA_entero"/>
    <property type="match status" value="1"/>
</dbReference>
<dbReference type="PANTHER" id="PTHR33254">
    <property type="entry name" value="4-HYDROXY-4-METHYL-2-OXOGLUTARATE ALDOLASE 3-RELATED"/>
    <property type="match status" value="1"/>
</dbReference>
<dbReference type="PANTHER" id="PTHR33254:SF29">
    <property type="entry name" value="REGULATOR OF RIBONUCLEASE ACTIVITY A"/>
    <property type="match status" value="1"/>
</dbReference>
<dbReference type="Pfam" id="PF03737">
    <property type="entry name" value="RraA-like"/>
    <property type="match status" value="1"/>
</dbReference>
<dbReference type="SUPFAM" id="SSF89562">
    <property type="entry name" value="RraA-like"/>
    <property type="match status" value="1"/>
</dbReference>